<reference evidence="4 5" key="1">
    <citation type="journal article" date="2007" name="FEMS Microbiol. Lett.">
        <title>Amino acid and nucleotide sequence, adjacent genes, and heterologous expression of hiracin JM79, a sec-dependent bacteriocin produced by Enterococcus hirae DCH5, isolated from Mallard ducks (Anas platyrhynchos).</title>
        <authorList>
            <person name="Sanchez J."/>
            <person name="Diep D.B."/>
            <person name="Herranz C."/>
            <person name="Nes I.F."/>
            <person name="Cintas L.M."/>
            <person name="Hernandez P.E."/>
        </authorList>
    </citation>
    <scope>NUCLEOTIDE SEQUENCE [GENOMIC DNA]</scope>
    <scope>PROTEIN SEQUENCE OF 31-72</scope>
    <scope>FUNCTION</scope>
    <scope>SUBCELLULAR LOCATION</scope>
    <scope>MASS SPECTROMETRY</scope>
    <source>
        <strain evidence="5">DCH5</strain>
    </source>
</reference>
<protein>
    <recommendedName>
        <fullName>Bacteriocin hiracin-JM79</fullName>
    </recommendedName>
    <alternativeName>
        <fullName evidence="5">Class II sec-dependent bacteriocin</fullName>
    </alternativeName>
</protein>
<keyword id="KW-0044">Antibiotic</keyword>
<keyword id="KW-0929">Antimicrobial</keyword>
<keyword id="KW-0078">Bacteriocin</keyword>
<keyword id="KW-0903">Direct protein sequencing</keyword>
<keyword id="KW-0964">Secreted</keyword>
<keyword id="KW-0732">Signal</keyword>
<dbReference type="EMBL" id="DQ664500">
    <property type="protein sequence ID" value="ABG47453.1"/>
    <property type="molecule type" value="Genomic_DNA"/>
</dbReference>
<dbReference type="RefSeq" id="WP_002363584.1">
    <property type="nucleotide sequence ID" value="NZ_CABEIL010000002.1"/>
</dbReference>
<dbReference type="SMR" id="Q0Z8B6"/>
<dbReference type="GO" id="GO:0005576">
    <property type="term" value="C:extracellular region"/>
    <property type="evidence" value="ECO:0000314"/>
    <property type="project" value="UniProtKB"/>
</dbReference>
<dbReference type="GO" id="GO:0050830">
    <property type="term" value="P:defense response to Gram-positive bacterium"/>
    <property type="evidence" value="ECO:0000314"/>
    <property type="project" value="UniProtKB"/>
</dbReference>
<dbReference type="GO" id="GO:0031640">
    <property type="term" value="P:killing of cells of another organism"/>
    <property type="evidence" value="ECO:0007669"/>
    <property type="project" value="UniProtKB-KW"/>
</dbReference>
<dbReference type="FunFam" id="1.20.5.130:FF:000001">
    <property type="entry name" value="Bacteriocin hiracin-JM79"/>
    <property type="match status" value="1"/>
</dbReference>
<dbReference type="Gene3D" id="1.20.5.130">
    <property type="match status" value="1"/>
</dbReference>
<dbReference type="InterPro" id="IPR002633">
    <property type="entry name" value="Bacteriocin_IIa"/>
</dbReference>
<dbReference type="InterPro" id="IPR023384">
    <property type="entry name" value="Bacteriocin_IIa_CS"/>
</dbReference>
<dbReference type="InterPro" id="IPR023388">
    <property type="entry name" value="Bacteriocin_IIa_dom_sf"/>
</dbReference>
<dbReference type="Pfam" id="PF01721">
    <property type="entry name" value="Bacteriocin_II"/>
    <property type="match status" value="1"/>
</dbReference>
<dbReference type="PROSITE" id="PS60030">
    <property type="entry name" value="BACTERIOCIN_IIA"/>
    <property type="match status" value="1"/>
</dbReference>
<proteinExistence type="evidence at protein level"/>
<gene>
    <name evidence="3" type="primary">hirJM79</name>
</gene>
<name>HJM79_ENTHR</name>
<evidence type="ECO:0000255" key="1"/>
<evidence type="ECO:0000269" key="2">
    <source>
    </source>
</evidence>
<evidence type="ECO:0000303" key="3">
    <source>
    </source>
</evidence>
<evidence type="ECO:0000305" key="4"/>
<evidence type="ECO:0000312" key="5">
    <source>
        <dbReference type="EMBL" id="ABG47453.1"/>
    </source>
</evidence>
<organism>
    <name type="scientific">Enterococcus hirae</name>
    <dbReference type="NCBI Taxonomy" id="1354"/>
    <lineage>
        <taxon>Bacteria</taxon>
        <taxon>Bacillati</taxon>
        <taxon>Bacillota</taxon>
        <taxon>Bacilli</taxon>
        <taxon>Lactobacillales</taxon>
        <taxon>Enterococcaceae</taxon>
        <taxon>Enterococcus</taxon>
    </lineage>
</organism>
<accession>Q0Z8B6</accession>
<comment type="function">
    <text evidence="2">Bacteriocin with antibacterial activity against the Gram-positive Listeria, Enterococcus, Propionibacterium, Staphylococcus and some strains of Clostridium, Lactobacillus and Pediococcus. Lacks antibacterial activity against Gram-negative bacteria.</text>
</comment>
<comment type="subcellular location">
    <subcellularLocation>
        <location evidence="2">Secreted</location>
    </subcellularLocation>
</comment>
<comment type="mass spectrometry"/>
<comment type="similarity">
    <text evidence="1">Belongs to the bacteriocin class IIA/YGNGV family.</text>
</comment>
<feature type="signal peptide" evidence="2">
    <location>
        <begin position="1"/>
        <end position="30"/>
    </location>
</feature>
<feature type="chain" id="PRO_0000352779" description="Bacteriocin hiracin-JM79">
    <location>
        <begin position="31"/>
        <end position="74"/>
    </location>
</feature>
<feature type="sequence conflict" description="In Ref. 1; AA sequence." evidence="4" ref="1">
    <original>T</original>
    <variation>G</variation>
    <location>
        <position position="32"/>
    </location>
</feature>
<sequence>MKKKVLKHCVILGILGTCLAGIGTGIKVDAATYYGNGLYCNKEKCWVDWNQAKGEIGKIIVNGWVNHGPWAPRR</sequence>